<organism>
    <name type="scientific">Haemophilus influenzae (strain ATCC 51907 / DSM 11121 / KW20 / Rd)</name>
    <dbReference type="NCBI Taxonomy" id="71421"/>
    <lineage>
        <taxon>Bacteria</taxon>
        <taxon>Pseudomonadati</taxon>
        <taxon>Pseudomonadota</taxon>
        <taxon>Gammaproteobacteria</taxon>
        <taxon>Pasteurellales</taxon>
        <taxon>Pasteurellaceae</taxon>
        <taxon>Haemophilus</taxon>
    </lineage>
</organism>
<protein>
    <recommendedName>
        <fullName evidence="1">Phosphoribosylglycinamide formyltransferase</fullName>
        <ecNumber evidence="1">2.1.2.2</ecNumber>
    </recommendedName>
    <alternativeName>
        <fullName evidence="1">5'-phosphoribosylglycinamide transformylase</fullName>
    </alternativeName>
    <alternativeName>
        <fullName evidence="1">GAR transformylase</fullName>
        <shortName evidence="1">GART</shortName>
    </alternativeName>
</protein>
<sequence length="212" mass="23463">MKKIAVLISGQGTNLQTIIDACHSGDIPAKIACVISNKADAYGLVRAKQAQIPQAVFLRKNFSNNLEMDDAIGDYLQSLAVDLIVLAGYMKILTPKFTQRFAGKILNIHPSLLPKYAGLNTYQRAIEAGDNEHGTTVHFVNEEVDGGAIVLQAKVPIFPEDSIEEVEARTREQEYQIYPLVIKWFTEGRLRLKDNLAYLDGKALPKSGYANE</sequence>
<reference key="1">
    <citation type="journal article" date="1995" name="Science">
        <title>Whole-genome random sequencing and assembly of Haemophilus influenzae Rd.</title>
        <authorList>
            <person name="Fleischmann R.D."/>
            <person name="Adams M.D."/>
            <person name="White O."/>
            <person name="Clayton R.A."/>
            <person name="Kirkness E.F."/>
            <person name="Kerlavage A.R."/>
            <person name="Bult C.J."/>
            <person name="Tomb J.-F."/>
            <person name="Dougherty B.A."/>
            <person name="Merrick J.M."/>
            <person name="McKenney K."/>
            <person name="Sutton G.G."/>
            <person name="FitzHugh W."/>
            <person name="Fields C.A."/>
            <person name="Gocayne J.D."/>
            <person name="Scott J.D."/>
            <person name="Shirley R."/>
            <person name="Liu L.-I."/>
            <person name="Glodek A."/>
            <person name="Kelley J.M."/>
            <person name="Weidman J.F."/>
            <person name="Phillips C.A."/>
            <person name="Spriggs T."/>
            <person name="Hedblom E."/>
            <person name="Cotton M.D."/>
            <person name="Utterback T.R."/>
            <person name="Hanna M.C."/>
            <person name="Nguyen D.T."/>
            <person name="Saudek D.M."/>
            <person name="Brandon R.C."/>
            <person name="Fine L.D."/>
            <person name="Fritchman J.L."/>
            <person name="Fuhrmann J.L."/>
            <person name="Geoghagen N.S.M."/>
            <person name="Gnehm C.L."/>
            <person name="McDonald L.A."/>
            <person name="Small K.V."/>
            <person name="Fraser C.M."/>
            <person name="Smith H.O."/>
            <person name="Venter J.C."/>
        </authorList>
    </citation>
    <scope>NUCLEOTIDE SEQUENCE [LARGE SCALE GENOMIC DNA]</scope>
    <source>
        <strain>ATCC 51907 / DSM 11121 / KW20 / Rd</strain>
    </source>
</reference>
<keyword id="KW-0658">Purine biosynthesis</keyword>
<keyword id="KW-1185">Reference proteome</keyword>
<keyword id="KW-0808">Transferase</keyword>
<comment type="function">
    <text evidence="1">Catalyzes the transfer of a formyl group from 10-formyltetrahydrofolate to 5-phospho-ribosyl-glycinamide (GAR), producing 5-phospho-ribosyl-N-formylglycinamide (FGAR) and tetrahydrofolate.</text>
</comment>
<comment type="catalytic activity">
    <reaction evidence="1">
        <text>N(1)-(5-phospho-beta-D-ribosyl)glycinamide + (6R)-10-formyltetrahydrofolate = N(2)-formyl-N(1)-(5-phospho-beta-D-ribosyl)glycinamide + (6S)-5,6,7,8-tetrahydrofolate + H(+)</text>
        <dbReference type="Rhea" id="RHEA:15053"/>
        <dbReference type="ChEBI" id="CHEBI:15378"/>
        <dbReference type="ChEBI" id="CHEBI:57453"/>
        <dbReference type="ChEBI" id="CHEBI:143788"/>
        <dbReference type="ChEBI" id="CHEBI:147286"/>
        <dbReference type="ChEBI" id="CHEBI:195366"/>
        <dbReference type="EC" id="2.1.2.2"/>
    </reaction>
</comment>
<comment type="pathway">
    <text evidence="1">Purine metabolism; IMP biosynthesis via de novo pathway; N(2)-formyl-N(1)-(5-phospho-D-ribosyl)glycinamide from N(1)-(5-phospho-D-ribosyl)glycinamide (10-formyl THF route): step 1/1.</text>
</comment>
<comment type="similarity">
    <text evidence="1">Belongs to the GART family.</text>
</comment>
<accession>P43846</accession>
<feature type="chain" id="PRO_0000074944" description="Phosphoribosylglycinamide formyltransferase">
    <location>
        <begin position="1"/>
        <end position="212"/>
    </location>
</feature>
<feature type="active site" description="Proton donor" evidence="1">
    <location>
        <position position="109"/>
    </location>
</feature>
<feature type="binding site" evidence="1">
    <location>
        <begin position="12"/>
        <end position="14"/>
    </location>
    <ligand>
        <name>N(1)-(5-phospho-beta-D-ribosyl)glycinamide</name>
        <dbReference type="ChEBI" id="CHEBI:143788"/>
    </ligand>
</feature>
<feature type="binding site" evidence="1">
    <location>
        <begin position="90"/>
        <end position="93"/>
    </location>
    <ligand>
        <name>(6R)-10-formyltetrahydrofolate</name>
        <dbReference type="ChEBI" id="CHEBI:195366"/>
    </ligand>
</feature>
<feature type="binding site" evidence="1">
    <location>
        <position position="107"/>
    </location>
    <ligand>
        <name>(6R)-10-formyltetrahydrofolate</name>
        <dbReference type="ChEBI" id="CHEBI:195366"/>
    </ligand>
</feature>
<feature type="site" description="Raises pKa of active site His" evidence="1">
    <location>
        <position position="145"/>
    </location>
</feature>
<gene>
    <name evidence="1" type="primary">purN</name>
    <name type="ordered locus">HI_1428</name>
</gene>
<proteinExistence type="inferred from homology"/>
<dbReference type="EC" id="2.1.2.2" evidence="1"/>
<dbReference type="EMBL" id="L42023">
    <property type="protein sequence ID" value="AAC23075.1"/>
    <property type="molecule type" value="Genomic_DNA"/>
</dbReference>
<dbReference type="PIR" id="F64122">
    <property type="entry name" value="F64122"/>
</dbReference>
<dbReference type="RefSeq" id="NP_439577.1">
    <property type="nucleotide sequence ID" value="NC_000907.1"/>
</dbReference>
<dbReference type="SMR" id="P43846"/>
<dbReference type="STRING" id="71421.HI_1428"/>
<dbReference type="EnsemblBacteria" id="AAC23075">
    <property type="protein sequence ID" value="AAC23075"/>
    <property type="gene ID" value="HI_1428"/>
</dbReference>
<dbReference type="KEGG" id="hin:HI_1428"/>
<dbReference type="PATRIC" id="fig|71421.8.peg.1485"/>
<dbReference type="eggNOG" id="COG0299">
    <property type="taxonomic scope" value="Bacteria"/>
</dbReference>
<dbReference type="HOGENOM" id="CLU_038395_1_1_6"/>
<dbReference type="OrthoDB" id="9806170at2"/>
<dbReference type="PhylomeDB" id="P43846"/>
<dbReference type="BioCyc" id="HINF71421:G1GJ1-1451-MONOMER"/>
<dbReference type="UniPathway" id="UPA00074">
    <property type="reaction ID" value="UER00126"/>
</dbReference>
<dbReference type="Proteomes" id="UP000000579">
    <property type="component" value="Chromosome"/>
</dbReference>
<dbReference type="GO" id="GO:0005737">
    <property type="term" value="C:cytoplasm"/>
    <property type="evidence" value="ECO:0000318"/>
    <property type="project" value="GO_Central"/>
</dbReference>
<dbReference type="GO" id="GO:0005829">
    <property type="term" value="C:cytosol"/>
    <property type="evidence" value="ECO:0000318"/>
    <property type="project" value="GO_Central"/>
</dbReference>
<dbReference type="GO" id="GO:0004644">
    <property type="term" value="F:phosphoribosylglycinamide formyltransferase activity"/>
    <property type="evidence" value="ECO:0000318"/>
    <property type="project" value="GO_Central"/>
</dbReference>
<dbReference type="GO" id="GO:0006189">
    <property type="term" value="P:'de novo' IMP biosynthetic process"/>
    <property type="evidence" value="ECO:0000318"/>
    <property type="project" value="GO_Central"/>
</dbReference>
<dbReference type="CDD" id="cd08645">
    <property type="entry name" value="FMT_core_GART"/>
    <property type="match status" value="1"/>
</dbReference>
<dbReference type="FunFam" id="3.40.50.170:FF:000036">
    <property type="entry name" value="Phosphoribosylglycinamide formyltransferase"/>
    <property type="match status" value="1"/>
</dbReference>
<dbReference type="Gene3D" id="3.40.50.170">
    <property type="entry name" value="Formyl transferase, N-terminal domain"/>
    <property type="match status" value="1"/>
</dbReference>
<dbReference type="HAMAP" id="MF_01930">
    <property type="entry name" value="PurN"/>
    <property type="match status" value="1"/>
</dbReference>
<dbReference type="InterPro" id="IPR002376">
    <property type="entry name" value="Formyl_transf_N"/>
</dbReference>
<dbReference type="InterPro" id="IPR036477">
    <property type="entry name" value="Formyl_transf_N_sf"/>
</dbReference>
<dbReference type="InterPro" id="IPR004607">
    <property type="entry name" value="GART"/>
</dbReference>
<dbReference type="InterPro" id="IPR001555">
    <property type="entry name" value="GART_AS"/>
</dbReference>
<dbReference type="NCBIfam" id="TIGR00639">
    <property type="entry name" value="PurN"/>
    <property type="match status" value="1"/>
</dbReference>
<dbReference type="PANTHER" id="PTHR43369">
    <property type="entry name" value="PHOSPHORIBOSYLGLYCINAMIDE FORMYLTRANSFERASE"/>
    <property type="match status" value="1"/>
</dbReference>
<dbReference type="PANTHER" id="PTHR43369:SF2">
    <property type="entry name" value="PHOSPHORIBOSYLGLYCINAMIDE FORMYLTRANSFERASE"/>
    <property type="match status" value="1"/>
</dbReference>
<dbReference type="Pfam" id="PF00551">
    <property type="entry name" value="Formyl_trans_N"/>
    <property type="match status" value="1"/>
</dbReference>
<dbReference type="SUPFAM" id="SSF53328">
    <property type="entry name" value="Formyltransferase"/>
    <property type="match status" value="1"/>
</dbReference>
<dbReference type="PROSITE" id="PS00373">
    <property type="entry name" value="GART"/>
    <property type="match status" value="1"/>
</dbReference>
<name>PUR3_HAEIN</name>
<evidence type="ECO:0000255" key="1">
    <source>
        <dbReference type="HAMAP-Rule" id="MF_01930"/>
    </source>
</evidence>